<reference key="1">
    <citation type="journal article" date="2007" name="Nat. Biotechnol.">
        <title>Comparative analysis of the complete genome sequence of the plant growth-promoting bacterium Bacillus amyloliquefaciens FZB42.</title>
        <authorList>
            <person name="Chen X.H."/>
            <person name="Koumoutsi A."/>
            <person name="Scholz R."/>
            <person name="Eisenreich A."/>
            <person name="Schneider K."/>
            <person name="Heinemeyer I."/>
            <person name="Morgenstern B."/>
            <person name="Voss B."/>
            <person name="Hess W.R."/>
            <person name="Reva O."/>
            <person name="Junge H."/>
            <person name="Voigt B."/>
            <person name="Jungblut P.R."/>
            <person name="Vater J."/>
            <person name="Suessmuth R."/>
            <person name="Liesegang H."/>
            <person name="Strittmatter A."/>
            <person name="Gottschalk G."/>
            <person name="Borriss R."/>
        </authorList>
    </citation>
    <scope>NUCLEOTIDE SEQUENCE [LARGE SCALE GENOMIC DNA]</scope>
    <source>
        <strain>DSM 23117 / BGSC 10A6 / LMG 26770 / FZB42</strain>
    </source>
</reference>
<organism>
    <name type="scientific">Bacillus velezensis (strain DSM 23117 / BGSC 10A6 / LMG 26770 / FZB42)</name>
    <name type="common">Bacillus amyloliquefaciens subsp. plantarum</name>
    <dbReference type="NCBI Taxonomy" id="326423"/>
    <lineage>
        <taxon>Bacteria</taxon>
        <taxon>Bacillati</taxon>
        <taxon>Bacillota</taxon>
        <taxon>Bacilli</taxon>
        <taxon>Bacillales</taxon>
        <taxon>Bacillaceae</taxon>
        <taxon>Bacillus</taxon>
        <taxon>Bacillus amyloliquefaciens group</taxon>
    </lineage>
</organism>
<keyword id="KW-0028">Amino-acid biosynthesis</keyword>
<keyword id="KW-0055">Arginine biosynthesis</keyword>
<keyword id="KW-0067">ATP-binding</keyword>
<keyword id="KW-0963">Cytoplasm</keyword>
<keyword id="KW-0418">Kinase</keyword>
<keyword id="KW-0547">Nucleotide-binding</keyword>
<keyword id="KW-0808">Transferase</keyword>
<proteinExistence type="inferred from homology"/>
<accession>A7Z3A9</accession>
<dbReference type="EC" id="2.7.2.8" evidence="1"/>
<dbReference type="EMBL" id="CP000560">
    <property type="protein sequence ID" value="ABS73485.1"/>
    <property type="molecule type" value="Genomic_DNA"/>
</dbReference>
<dbReference type="RefSeq" id="WP_007409134.1">
    <property type="nucleotide sequence ID" value="NC_009725.2"/>
</dbReference>
<dbReference type="SMR" id="A7Z3A9"/>
<dbReference type="GeneID" id="93080258"/>
<dbReference type="KEGG" id="bay:RBAM_011210"/>
<dbReference type="HOGENOM" id="CLU_053680_0_0_9"/>
<dbReference type="UniPathway" id="UPA00068">
    <property type="reaction ID" value="UER00107"/>
</dbReference>
<dbReference type="Proteomes" id="UP000001120">
    <property type="component" value="Chromosome"/>
</dbReference>
<dbReference type="GO" id="GO:0005737">
    <property type="term" value="C:cytoplasm"/>
    <property type="evidence" value="ECO:0007669"/>
    <property type="project" value="UniProtKB-SubCell"/>
</dbReference>
<dbReference type="GO" id="GO:0003991">
    <property type="term" value="F:acetylglutamate kinase activity"/>
    <property type="evidence" value="ECO:0007669"/>
    <property type="project" value="UniProtKB-UniRule"/>
</dbReference>
<dbReference type="GO" id="GO:0005524">
    <property type="term" value="F:ATP binding"/>
    <property type="evidence" value="ECO:0007669"/>
    <property type="project" value="UniProtKB-UniRule"/>
</dbReference>
<dbReference type="GO" id="GO:0042450">
    <property type="term" value="P:arginine biosynthetic process via ornithine"/>
    <property type="evidence" value="ECO:0007669"/>
    <property type="project" value="UniProtKB-UniRule"/>
</dbReference>
<dbReference type="GO" id="GO:0006526">
    <property type="term" value="P:L-arginine biosynthetic process"/>
    <property type="evidence" value="ECO:0007669"/>
    <property type="project" value="UniProtKB-UniPathway"/>
</dbReference>
<dbReference type="CDD" id="cd04238">
    <property type="entry name" value="AAK_NAGK-like"/>
    <property type="match status" value="1"/>
</dbReference>
<dbReference type="FunFam" id="3.40.1160.10:FF:000004">
    <property type="entry name" value="Acetylglutamate kinase"/>
    <property type="match status" value="1"/>
</dbReference>
<dbReference type="Gene3D" id="3.40.1160.10">
    <property type="entry name" value="Acetylglutamate kinase-like"/>
    <property type="match status" value="1"/>
</dbReference>
<dbReference type="HAMAP" id="MF_00082">
    <property type="entry name" value="ArgB"/>
    <property type="match status" value="1"/>
</dbReference>
<dbReference type="InterPro" id="IPR036393">
    <property type="entry name" value="AceGlu_kinase-like_sf"/>
</dbReference>
<dbReference type="InterPro" id="IPR004662">
    <property type="entry name" value="AcgluKinase_fam"/>
</dbReference>
<dbReference type="InterPro" id="IPR037528">
    <property type="entry name" value="ArgB"/>
</dbReference>
<dbReference type="InterPro" id="IPR001048">
    <property type="entry name" value="Asp/Glu/Uridylate_kinase"/>
</dbReference>
<dbReference type="InterPro" id="IPR001057">
    <property type="entry name" value="Glu/AcGlu_kinase"/>
</dbReference>
<dbReference type="NCBIfam" id="TIGR00761">
    <property type="entry name" value="argB"/>
    <property type="match status" value="1"/>
</dbReference>
<dbReference type="PANTHER" id="PTHR23342">
    <property type="entry name" value="N-ACETYLGLUTAMATE SYNTHASE"/>
    <property type="match status" value="1"/>
</dbReference>
<dbReference type="PANTHER" id="PTHR23342:SF0">
    <property type="entry name" value="N-ACETYLGLUTAMATE SYNTHASE, MITOCHONDRIAL"/>
    <property type="match status" value="1"/>
</dbReference>
<dbReference type="Pfam" id="PF00696">
    <property type="entry name" value="AA_kinase"/>
    <property type="match status" value="1"/>
</dbReference>
<dbReference type="PIRSF" id="PIRSF000728">
    <property type="entry name" value="NAGK"/>
    <property type="match status" value="1"/>
</dbReference>
<dbReference type="PRINTS" id="PR00474">
    <property type="entry name" value="GLU5KINASE"/>
</dbReference>
<dbReference type="SUPFAM" id="SSF53633">
    <property type="entry name" value="Carbamate kinase-like"/>
    <property type="match status" value="1"/>
</dbReference>
<feature type="chain" id="PRO_1000010483" description="Acetylglutamate kinase">
    <location>
        <begin position="1"/>
        <end position="258"/>
    </location>
</feature>
<feature type="binding site" evidence="1">
    <location>
        <begin position="41"/>
        <end position="42"/>
    </location>
    <ligand>
        <name>substrate</name>
    </ligand>
</feature>
<feature type="binding site" evidence="1">
    <location>
        <position position="63"/>
    </location>
    <ligand>
        <name>substrate</name>
    </ligand>
</feature>
<feature type="binding site" evidence="1">
    <location>
        <position position="156"/>
    </location>
    <ligand>
        <name>substrate</name>
    </ligand>
</feature>
<feature type="site" description="Transition state stabilizer" evidence="1">
    <location>
        <position position="8"/>
    </location>
</feature>
<feature type="site" description="Transition state stabilizer" evidence="1">
    <location>
        <position position="215"/>
    </location>
</feature>
<name>ARGB_BACVZ</name>
<sequence length="258" mass="27555">MKKTIVFKCGGSVIRELSADFFQNVKELMQSGWNIAVVHGGGPDISKMLKTLQIETEFVDGQRKTTKPVLETAEMVLSGTINKFFVTELAKNGLKAAGISGKDGGLLQASYLNQDKYGEVGEIQKTDPSIIHALMKEGIIPVIAPLSMTSDFETLNVNADAAASAVASALHADKLLFVTDVEGIMDGESRLDTLTPQEIQALIDDGVISGGMIPKVNSALSALSEDVEEVMIVNGKGAFFTDQAFQGTKIVKEKESVS</sequence>
<evidence type="ECO:0000255" key="1">
    <source>
        <dbReference type="HAMAP-Rule" id="MF_00082"/>
    </source>
</evidence>
<gene>
    <name evidence="1" type="primary">argB</name>
    <name type="ordered locus">RBAM_011210</name>
</gene>
<protein>
    <recommendedName>
        <fullName evidence="1">Acetylglutamate kinase</fullName>
        <ecNumber evidence="1">2.7.2.8</ecNumber>
    </recommendedName>
    <alternativeName>
        <fullName evidence="1">N-acetyl-L-glutamate 5-phosphotransferase</fullName>
    </alternativeName>
    <alternativeName>
        <fullName evidence="1">NAG kinase</fullName>
        <shortName evidence="1">NAGK</shortName>
    </alternativeName>
</protein>
<comment type="function">
    <text evidence="1">Catalyzes the ATP-dependent phosphorylation of N-acetyl-L-glutamate.</text>
</comment>
<comment type="catalytic activity">
    <reaction evidence="1">
        <text>N-acetyl-L-glutamate + ATP = N-acetyl-L-glutamyl 5-phosphate + ADP</text>
        <dbReference type="Rhea" id="RHEA:14629"/>
        <dbReference type="ChEBI" id="CHEBI:30616"/>
        <dbReference type="ChEBI" id="CHEBI:44337"/>
        <dbReference type="ChEBI" id="CHEBI:57936"/>
        <dbReference type="ChEBI" id="CHEBI:456216"/>
        <dbReference type="EC" id="2.7.2.8"/>
    </reaction>
</comment>
<comment type="pathway">
    <text evidence="1">Amino-acid biosynthesis; L-arginine biosynthesis; N(2)-acetyl-L-ornithine from L-glutamate: step 2/4.</text>
</comment>
<comment type="subcellular location">
    <subcellularLocation>
        <location evidence="1">Cytoplasm</location>
    </subcellularLocation>
</comment>
<comment type="similarity">
    <text evidence="1">Belongs to the acetylglutamate kinase family. ArgB subfamily.</text>
</comment>